<sequence length="139" mass="15655">MRIMGLDVGSKTVGVAISDPLGFTAQGLEIIQINEEQGQFGFDRVKELVDTYKVERFVVGLPKNMNNTSGPRVEASQAYGAKLEEFFGLPVDYQDERLTTVAAERMLIEQADISRNKRKKVIDKLAAQLILQNYLDRKF</sequence>
<gene>
    <name type="ordered locus">SP70585_0253</name>
</gene>
<name>YQGF_STRP7</name>
<comment type="function">
    <text evidence="1">Could be a nuclease involved in processing of the 5'-end of pre-16S rRNA.</text>
</comment>
<comment type="subcellular location">
    <subcellularLocation>
        <location evidence="1">Cytoplasm</location>
    </subcellularLocation>
</comment>
<comment type="similarity">
    <text evidence="1">Belongs to the YqgF nuclease family.</text>
</comment>
<accession>C1CAK0</accession>
<reference key="1">
    <citation type="journal article" date="2010" name="Genome Biol.">
        <title>Structure and dynamics of the pan-genome of Streptococcus pneumoniae and closely related species.</title>
        <authorList>
            <person name="Donati C."/>
            <person name="Hiller N.L."/>
            <person name="Tettelin H."/>
            <person name="Muzzi A."/>
            <person name="Croucher N.J."/>
            <person name="Angiuoli S.V."/>
            <person name="Oggioni M."/>
            <person name="Dunning Hotopp J.C."/>
            <person name="Hu F.Z."/>
            <person name="Riley D.R."/>
            <person name="Covacci A."/>
            <person name="Mitchell T.J."/>
            <person name="Bentley S.D."/>
            <person name="Kilian M."/>
            <person name="Ehrlich G.D."/>
            <person name="Rappuoli R."/>
            <person name="Moxon E.R."/>
            <person name="Masignani V."/>
        </authorList>
    </citation>
    <scope>NUCLEOTIDE SEQUENCE [LARGE SCALE GENOMIC DNA]</scope>
    <source>
        <strain>70585</strain>
    </source>
</reference>
<protein>
    <recommendedName>
        <fullName evidence="1">Putative pre-16S rRNA nuclease</fullName>
        <ecNumber evidence="1">3.1.-.-</ecNumber>
    </recommendedName>
</protein>
<keyword id="KW-0963">Cytoplasm</keyword>
<keyword id="KW-0378">Hydrolase</keyword>
<keyword id="KW-0540">Nuclease</keyword>
<keyword id="KW-0690">Ribosome biogenesis</keyword>
<dbReference type="EC" id="3.1.-.-" evidence="1"/>
<dbReference type="EMBL" id="CP000918">
    <property type="protein sequence ID" value="ACO17694.1"/>
    <property type="molecule type" value="Genomic_DNA"/>
</dbReference>
<dbReference type="SMR" id="C1CAK0"/>
<dbReference type="KEGG" id="snm:SP70585_0253"/>
<dbReference type="HOGENOM" id="CLU_098240_2_0_9"/>
<dbReference type="Proteomes" id="UP000002211">
    <property type="component" value="Chromosome"/>
</dbReference>
<dbReference type="GO" id="GO:0005829">
    <property type="term" value="C:cytosol"/>
    <property type="evidence" value="ECO:0007669"/>
    <property type="project" value="TreeGrafter"/>
</dbReference>
<dbReference type="GO" id="GO:0004518">
    <property type="term" value="F:nuclease activity"/>
    <property type="evidence" value="ECO:0007669"/>
    <property type="project" value="UniProtKB-KW"/>
</dbReference>
<dbReference type="GO" id="GO:0000967">
    <property type="term" value="P:rRNA 5'-end processing"/>
    <property type="evidence" value="ECO:0007669"/>
    <property type="project" value="UniProtKB-UniRule"/>
</dbReference>
<dbReference type="CDD" id="cd16964">
    <property type="entry name" value="YqgF"/>
    <property type="match status" value="1"/>
</dbReference>
<dbReference type="FunFam" id="3.30.420.140:FF:000003">
    <property type="entry name" value="Putative pre-16S rRNA nuclease"/>
    <property type="match status" value="1"/>
</dbReference>
<dbReference type="Gene3D" id="3.30.420.140">
    <property type="entry name" value="YqgF/RNase H-like domain"/>
    <property type="match status" value="1"/>
</dbReference>
<dbReference type="HAMAP" id="MF_00651">
    <property type="entry name" value="Nuclease_YqgF"/>
    <property type="match status" value="1"/>
</dbReference>
<dbReference type="InterPro" id="IPR012337">
    <property type="entry name" value="RNaseH-like_sf"/>
</dbReference>
<dbReference type="InterPro" id="IPR005227">
    <property type="entry name" value="YqgF"/>
</dbReference>
<dbReference type="InterPro" id="IPR006641">
    <property type="entry name" value="YqgF/RNaseH-like_dom"/>
</dbReference>
<dbReference type="InterPro" id="IPR037027">
    <property type="entry name" value="YqgF/RNaseH-like_dom_sf"/>
</dbReference>
<dbReference type="NCBIfam" id="TIGR00250">
    <property type="entry name" value="RNAse_H_YqgF"/>
    <property type="match status" value="1"/>
</dbReference>
<dbReference type="PANTHER" id="PTHR33317">
    <property type="entry name" value="POLYNUCLEOTIDYL TRANSFERASE, RIBONUCLEASE H-LIKE SUPERFAMILY PROTEIN"/>
    <property type="match status" value="1"/>
</dbReference>
<dbReference type="PANTHER" id="PTHR33317:SF4">
    <property type="entry name" value="POLYNUCLEOTIDYL TRANSFERASE, RIBONUCLEASE H-LIKE SUPERFAMILY PROTEIN"/>
    <property type="match status" value="1"/>
</dbReference>
<dbReference type="Pfam" id="PF03652">
    <property type="entry name" value="RuvX"/>
    <property type="match status" value="1"/>
</dbReference>
<dbReference type="SMART" id="SM00732">
    <property type="entry name" value="YqgFc"/>
    <property type="match status" value="1"/>
</dbReference>
<dbReference type="SUPFAM" id="SSF53098">
    <property type="entry name" value="Ribonuclease H-like"/>
    <property type="match status" value="1"/>
</dbReference>
<organism>
    <name type="scientific">Streptococcus pneumoniae (strain 70585)</name>
    <dbReference type="NCBI Taxonomy" id="488221"/>
    <lineage>
        <taxon>Bacteria</taxon>
        <taxon>Bacillati</taxon>
        <taxon>Bacillota</taxon>
        <taxon>Bacilli</taxon>
        <taxon>Lactobacillales</taxon>
        <taxon>Streptococcaceae</taxon>
        <taxon>Streptococcus</taxon>
    </lineage>
</organism>
<proteinExistence type="inferred from homology"/>
<feature type="chain" id="PRO_1000147493" description="Putative pre-16S rRNA nuclease">
    <location>
        <begin position="1"/>
        <end position="139"/>
    </location>
</feature>
<evidence type="ECO:0000255" key="1">
    <source>
        <dbReference type="HAMAP-Rule" id="MF_00651"/>
    </source>
</evidence>